<gene>
    <name type="primary">pflB</name>
    <name type="ordered locus">SAUSA300_0220</name>
</gene>
<protein>
    <recommendedName>
        <fullName>Formate acetyltransferase</fullName>
        <ecNumber evidence="1">2.3.1.54</ecNumber>
    </recommendedName>
    <alternativeName>
        <fullName>Pyruvate formate-lyase</fullName>
    </alternativeName>
</protein>
<reference key="1">
    <citation type="journal article" date="2006" name="Lancet">
        <title>Complete genome sequence of USA300, an epidemic clone of community-acquired meticillin-resistant Staphylococcus aureus.</title>
        <authorList>
            <person name="Diep B.A."/>
            <person name="Gill S.R."/>
            <person name="Chang R.F."/>
            <person name="Phan T.H."/>
            <person name="Chen J.H."/>
            <person name="Davidson M.G."/>
            <person name="Lin F."/>
            <person name="Lin J."/>
            <person name="Carleton H.A."/>
            <person name="Mongodin E.F."/>
            <person name="Sensabaugh G.F."/>
            <person name="Perdreau-Remington F."/>
        </authorList>
    </citation>
    <scope>NUCLEOTIDE SEQUENCE [LARGE SCALE GENOMIC DNA]</scope>
    <source>
        <strain>USA300</strain>
    </source>
</reference>
<name>PFLB_STAA3</name>
<feature type="chain" id="PRO_0000271719" description="Formate acetyltransferase">
    <location>
        <begin position="1"/>
        <end position="749"/>
    </location>
</feature>
<feature type="domain" description="PFL" evidence="4">
    <location>
        <begin position="3"/>
        <end position="619"/>
    </location>
</feature>
<feature type="domain" description="Glycine radical" evidence="3">
    <location>
        <begin position="626"/>
        <end position="749"/>
    </location>
</feature>
<feature type="active site" description="S-acetylcysteine intermediate" evidence="1">
    <location>
        <position position="413"/>
    </location>
</feature>
<feature type="active site" description="Cysteine radical intermediate" evidence="1">
    <location>
        <position position="414"/>
    </location>
</feature>
<feature type="modified residue" description="Glycine radical" evidence="3">
    <location>
        <position position="724"/>
    </location>
</feature>
<evidence type="ECO:0000250" key="1">
    <source>
        <dbReference type="UniProtKB" id="P09373"/>
    </source>
</evidence>
<evidence type="ECO:0000250" key="2">
    <source>
        <dbReference type="UniProtKB" id="Q5HJF4"/>
    </source>
</evidence>
<evidence type="ECO:0000255" key="3">
    <source>
        <dbReference type="PROSITE-ProRule" id="PRU00493"/>
    </source>
</evidence>
<evidence type="ECO:0000255" key="4">
    <source>
        <dbReference type="PROSITE-ProRule" id="PRU00887"/>
    </source>
</evidence>
<evidence type="ECO:0000305" key="5"/>
<dbReference type="EC" id="2.3.1.54" evidence="1"/>
<dbReference type="EMBL" id="CP000255">
    <property type="protein sequence ID" value="ABD22608.1"/>
    <property type="molecule type" value="Genomic_DNA"/>
</dbReference>
<dbReference type="RefSeq" id="WP_000894660.1">
    <property type="nucleotide sequence ID" value="NZ_CP027476.1"/>
</dbReference>
<dbReference type="SMR" id="Q2FK44"/>
<dbReference type="KEGG" id="saa:SAUSA300_0220"/>
<dbReference type="HOGENOM" id="CLU_023898_0_0_9"/>
<dbReference type="UniPathway" id="UPA00920">
    <property type="reaction ID" value="UER00891"/>
</dbReference>
<dbReference type="Proteomes" id="UP000001939">
    <property type="component" value="Chromosome"/>
</dbReference>
<dbReference type="GO" id="GO:0005829">
    <property type="term" value="C:cytosol"/>
    <property type="evidence" value="ECO:0007669"/>
    <property type="project" value="TreeGrafter"/>
</dbReference>
<dbReference type="GO" id="GO:0008861">
    <property type="term" value="F:formate C-acetyltransferase activity"/>
    <property type="evidence" value="ECO:0007669"/>
    <property type="project" value="UniProtKB-EC"/>
</dbReference>
<dbReference type="GO" id="GO:0006006">
    <property type="term" value="P:glucose metabolic process"/>
    <property type="evidence" value="ECO:0007669"/>
    <property type="project" value="UniProtKB-KW"/>
</dbReference>
<dbReference type="CDD" id="cd01678">
    <property type="entry name" value="PFL1"/>
    <property type="match status" value="1"/>
</dbReference>
<dbReference type="FunFam" id="3.20.70.20:FF:000003">
    <property type="entry name" value="Formate acetyltransferase"/>
    <property type="match status" value="1"/>
</dbReference>
<dbReference type="Gene3D" id="3.20.70.20">
    <property type="match status" value="1"/>
</dbReference>
<dbReference type="InterPro" id="IPR050244">
    <property type="entry name" value="Auton_GlycylRad_Cofactor"/>
</dbReference>
<dbReference type="InterPro" id="IPR005949">
    <property type="entry name" value="Form_AcTrfase"/>
</dbReference>
<dbReference type="InterPro" id="IPR019777">
    <property type="entry name" value="Form_AcTrfase_GR_CS"/>
</dbReference>
<dbReference type="InterPro" id="IPR001150">
    <property type="entry name" value="Gly_radical"/>
</dbReference>
<dbReference type="InterPro" id="IPR004184">
    <property type="entry name" value="PFL_dom"/>
</dbReference>
<dbReference type="NCBIfam" id="TIGR01255">
    <property type="entry name" value="pyr_form_ly_1"/>
    <property type="match status" value="1"/>
</dbReference>
<dbReference type="PANTHER" id="PTHR30191">
    <property type="entry name" value="FORMATE ACETYLTRANSFERASE"/>
    <property type="match status" value="1"/>
</dbReference>
<dbReference type="PANTHER" id="PTHR30191:SF0">
    <property type="entry name" value="FORMATE ACETYLTRANSFERASE 1"/>
    <property type="match status" value="1"/>
</dbReference>
<dbReference type="Pfam" id="PF01228">
    <property type="entry name" value="Gly_radical"/>
    <property type="match status" value="1"/>
</dbReference>
<dbReference type="Pfam" id="PF02901">
    <property type="entry name" value="PFL-like"/>
    <property type="match status" value="1"/>
</dbReference>
<dbReference type="PIRSF" id="PIRSF000379">
    <property type="entry name" value="For_Ac_trans_1"/>
    <property type="match status" value="1"/>
</dbReference>
<dbReference type="SUPFAM" id="SSF51998">
    <property type="entry name" value="PFL-like glycyl radical enzymes"/>
    <property type="match status" value="1"/>
</dbReference>
<dbReference type="PROSITE" id="PS00850">
    <property type="entry name" value="GLY_RADICAL_1"/>
    <property type="match status" value="1"/>
</dbReference>
<dbReference type="PROSITE" id="PS51149">
    <property type="entry name" value="GLY_RADICAL_2"/>
    <property type="match status" value="1"/>
</dbReference>
<dbReference type="PROSITE" id="PS51554">
    <property type="entry name" value="PFL"/>
    <property type="match status" value="1"/>
</dbReference>
<organism>
    <name type="scientific">Staphylococcus aureus (strain USA300)</name>
    <dbReference type="NCBI Taxonomy" id="367830"/>
    <lineage>
        <taxon>Bacteria</taxon>
        <taxon>Bacillati</taxon>
        <taxon>Bacillota</taxon>
        <taxon>Bacilli</taxon>
        <taxon>Bacillales</taxon>
        <taxon>Staphylococcaceae</taxon>
        <taxon>Staphylococcus</taxon>
    </lineage>
</organism>
<accession>Q2FK44</accession>
<sequence>MLETNKNHATAWQGFKNGRWNRHVDVREFIQLNYTLYEGNDSFLAGPTEATSKLWEQVMQLSKEERERGGMWDMDTKVASTITSHDAGYLDKDLETIVGVQTEKPFKRSMQPFGGIRMAKAACEAYGYELDEETEKIFTDYRKTHNQGVFDAYSREMLNCRKAGVITGLPDAYGRGRIIGDYRRVALYGVDFLMEEKMHDFNTMSTEMSEDVIRLREELSEQYRALKELKELGQKYGFDLSRPAENFKEAVQWLYLAYLAAIKEQNGAAMSLGRTSTFLDIYAERDLKAGVITESEVQEIIDHFIMKLRIVKFARTPDYNELFSGDPTWVTESIGGVGIDGRPLVTKNSFRFLHSLDNLGPAPEPNLTVLWSVRLPDNFKTYCAKMSIKTSSIQYENDDIMRESYGDDYGIACCVSAMTIGKQMQFFGARANLAKTLLYAINGGKDEKSGAQVGPNFEGINSEVLEYDEVFKKFDQMMDWLAGVYINSLNVIHYMHDKYSYERIEMALHDTEIVRTMATGIAGLSVAADSLSAIKYAQVKPIRNEEGLVVDFEIEGDFPKYGNNDDRVDDIAVDLVERFMTKLRSHKTYRDSEHTMSVLTITSNVVYGKKTGNTPDGRKAGEPFAPGANPMHGRDQKGALSSLSSVAKIPYDCCKDGISNTFSIVPKSLGKEPEDQNRNLTSMLDGYAMQCGHHLNINVFNRETLIDAMEHPEEYPQLTIRVSGYAVNFIKLTREQQLDVISRTFHESM</sequence>
<keyword id="KW-0012">Acyltransferase</keyword>
<keyword id="KW-0119">Carbohydrate metabolism</keyword>
<keyword id="KW-0963">Cytoplasm</keyword>
<keyword id="KW-0313">Glucose metabolism</keyword>
<keyword id="KW-0556">Organic radical</keyword>
<keyword id="KW-0808">Transferase</keyword>
<comment type="function">
    <text evidence="1">Catalyzes the conversion of pyruvate to formate and acetyl-CoA.</text>
</comment>
<comment type="catalytic activity">
    <reaction evidence="1">
        <text>formate + acetyl-CoA = pyruvate + CoA</text>
        <dbReference type="Rhea" id="RHEA:11844"/>
        <dbReference type="ChEBI" id="CHEBI:15361"/>
        <dbReference type="ChEBI" id="CHEBI:15740"/>
        <dbReference type="ChEBI" id="CHEBI:57287"/>
        <dbReference type="ChEBI" id="CHEBI:57288"/>
        <dbReference type="EC" id="2.3.1.54"/>
    </reaction>
</comment>
<comment type="pathway">
    <text>Fermentation; pyruvate fermentation; formate from pyruvate: step 1/1.</text>
</comment>
<comment type="subunit">
    <text evidence="1">Homodimer.</text>
</comment>
<comment type="subcellular location">
    <subcellularLocation>
        <location evidence="2">Cytoplasm</location>
    </subcellularLocation>
</comment>
<comment type="miscellaneous">
    <text evidence="1">Several mechanisms have been proposed based on complexes formed with substrate analogs. After activation by the glycine radical, the cysteine radical, Cys-414, can abstract hydrogen atoms from the other active site cysteine, Cys-413, and from coenzyme A, and it can also transfer hydrogen atoms to product radicals. The other active site cysteine can attack the central carbonyl of pyruvate and covalently bind the product acetyl group.</text>
</comment>
<comment type="similarity">
    <text evidence="5">Belongs to the glycyl radical enzyme (GRE) family. PFL subfamily.</text>
</comment>
<proteinExistence type="inferred from homology"/>